<proteinExistence type="inferred from homology"/>
<reference key="1">
    <citation type="journal article" date="2001" name="Nature">
        <title>Complete genome sequence of a multiple drug resistant Salmonella enterica serovar Typhi CT18.</title>
        <authorList>
            <person name="Parkhill J."/>
            <person name="Dougan G."/>
            <person name="James K.D."/>
            <person name="Thomson N.R."/>
            <person name="Pickard D."/>
            <person name="Wain J."/>
            <person name="Churcher C.M."/>
            <person name="Mungall K.L."/>
            <person name="Bentley S.D."/>
            <person name="Holden M.T.G."/>
            <person name="Sebaihia M."/>
            <person name="Baker S."/>
            <person name="Basham D."/>
            <person name="Brooks K."/>
            <person name="Chillingworth T."/>
            <person name="Connerton P."/>
            <person name="Cronin A."/>
            <person name="Davis P."/>
            <person name="Davies R.M."/>
            <person name="Dowd L."/>
            <person name="White N."/>
            <person name="Farrar J."/>
            <person name="Feltwell T."/>
            <person name="Hamlin N."/>
            <person name="Haque A."/>
            <person name="Hien T.T."/>
            <person name="Holroyd S."/>
            <person name="Jagels K."/>
            <person name="Krogh A."/>
            <person name="Larsen T.S."/>
            <person name="Leather S."/>
            <person name="Moule S."/>
            <person name="O'Gaora P."/>
            <person name="Parry C."/>
            <person name="Quail M.A."/>
            <person name="Rutherford K.M."/>
            <person name="Simmonds M."/>
            <person name="Skelton J."/>
            <person name="Stevens K."/>
            <person name="Whitehead S."/>
            <person name="Barrell B.G."/>
        </authorList>
    </citation>
    <scope>NUCLEOTIDE SEQUENCE [LARGE SCALE GENOMIC DNA]</scope>
    <source>
        <strain>CT18</strain>
    </source>
</reference>
<reference key="2">
    <citation type="journal article" date="2003" name="J. Bacteriol.">
        <title>Comparative genomics of Salmonella enterica serovar Typhi strains Ty2 and CT18.</title>
        <authorList>
            <person name="Deng W."/>
            <person name="Liou S.-R."/>
            <person name="Plunkett G. III"/>
            <person name="Mayhew G.F."/>
            <person name="Rose D.J."/>
            <person name="Burland V."/>
            <person name="Kodoyianni V."/>
            <person name="Schwartz D.C."/>
            <person name="Blattner F.R."/>
        </authorList>
    </citation>
    <scope>NUCLEOTIDE SEQUENCE [LARGE SCALE GENOMIC DNA]</scope>
    <source>
        <strain>ATCC 700931 / Ty2</strain>
    </source>
</reference>
<name>LIVG_SALTI</name>
<organism>
    <name type="scientific">Salmonella typhi</name>
    <dbReference type="NCBI Taxonomy" id="90370"/>
    <lineage>
        <taxon>Bacteria</taxon>
        <taxon>Pseudomonadati</taxon>
        <taxon>Pseudomonadota</taxon>
        <taxon>Gammaproteobacteria</taxon>
        <taxon>Enterobacterales</taxon>
        <taxon>Enterobacteriaceae</taxon>
        <taxon>Salmonella</taxon>
    </lineage>
</organism>
<protein>
    <recommendedName>
        <fullName>High-affinity branched-chain amino acid transport ATP-binding protein LivG</fullName>
    </recommendedName>
    <alternativeName>
        <fullName>LIV-I protein G</fullName>
    </alternativeName>
</protein>
<dbReference type="EMBL" id="AL513382">
    <property type="protein sequence ID" value="CAD08069.1"/>
    <property type="molecule type" value="Genomic_DNA"/>
</dbReference>
<dbReference type="EMBL" id="AE014613">
    <property type="protein sequence ID" value="AAO71431.1"/>
    <property type="molecule type" value="Genomic_DNA"/>
</dbReference>
<dbReference type="RefSeq" id="NP_458359.1">
    <property type="nucleotide sequence ID" value="NC_003198.1"/>
</dbReference>
<dbReference type="RefSeq" id="WP_000082083.1">
    <property type="nucleotide sequence ID" value="NZ_WSUR01000001.1"/>
</dbReference>
<dbReference type="SMR" id="P0A194"/>
<dbReference type="STRING" id="220341.gene:17588082"/>
<dbReference type="KEGG" id="stt:t3961"/>
<dbReference type="KEGG" id="sty:STY4251"/>
<dbReference type="PATRIC" id="fig|220341.7.peg.4341"/>
<dbReference type="eggNOG" id="COG0411">
    <property type="taxonomic scope" value="Bacteria"/>
</dbReference>
<dbReference type="HOGENOM" id="CLU_000604_1_2_6"/>
<dbReference type="OMA" id="EHDMRFI"/>
<dbReference type="OrthoDB" id="9805514at2"/>
<dbReference type="Proteomes" id="UP000000541">
    <property type="component" value="Chromosome"/>
</dbReference>
<dbReference type="Proteomes" id="UP000002670">
    <property type="component" value="Chromosome"/>
</dbReference>
<dbReference type="GO" id="GO:0005886">
    <property type="term" value="C:plasma membrane"/>
    <property type="evidence" value="ECO:0007669"/>
    <property type="project" value="TreeGrafter"/>
</dbReference>
<dbReference type="GO" id="GO:0005524">
    <property type="term" value="F:ATP binding"/>
    <property type="evidence" value="ECO:0007669"/>
    <property type="project" value="UniProtKB-KW"/>
</dbReference>
<dbReference type="GO" id="GO:0016887">
    <property type="term" value="F:ATP hydrolysis activity"/>
    <property type="evidence" value="ECO:0007669"/>
    <property type="project" value="InterPro"/>
</dbReference>
<dbReference type="GO" id="GO:0015188">
    <property type="term" value="F:L-isoleucine transmembrane transporter activity"/>
    <property type="evidence" value="ECO:0007669"/>
    <property type="project" value="TreeGrafter"/>
</dbReference>
<dbReference type="GO" id="GO:0015192">
    <property type="term" value="F:L-phenylalanine transmembrane transporter activity"/>
    <property type="evidence" value="ECO:0007669"/>
    <property type="project" value="TreeGrafter"/>
</dbReference>
<dbReference type="GO" id="GO:0005304">
    <property type="term" value="F:L-valine transmembrane transporter activity"/>
    <property type="evidence" value="ECO:0007669"/>
    <property type="project" value="TreeGrafter"/>
</dbReference>
<dbReference type="GO" id="GO:0042941">
    <property type="term" value="P:D-alanine transmembrane transport"/>
    <property type="evidence" value="ECO:0007669"/>
    <property type="project" value="TreeGrafter"/>
</dbReference>
<dbReference type="GO" id="GO:0015808">
    <property type="term" value="P:L-alanine transport"/>
    <property type="evidence" value="ECO:0007669"/>
    <property type="project" value="TreeGrafter"/>
</dbReference>
<dbReference type="GO" id="GO:1903806">
    <property type="term" value="P:L-isoleucine import across plasma membrane"/>
    <property type="evidence" value="ECO:0007669"/>
    <property type="project" value="TreeGrafter"/>
</dbReference>
<dbReference type="GO" id="GO:1903805">
    <property type="term" value="P:L-valine import across plasma membrane"/>
    <property type="evidence" value="ECO:0007669"/>
    <property type="project" value="TreeGrafter"/>
</dbReference>
<dbReference type="CDD" id="cd03219">
    <property type="entry name" value="ABC_Mj1267_LivG_branched"/>
    <property type="match status" value="1"/>
</dbReference>
<dbReference type="FunFam" id="3.40.50.300:FF:000317">
    <property type="entry name" value="Amino acid ABC transporter ATP-binding protein"/>
    <property type="match status" value="1"/>
</dbReference>
<dbReference type="Gene3D" id="3.40.50.300">
    <property type="entry name" value="P-loop containing nucleotide triphosphate hydrolases"/>
    <property type="match status" value="1"/>
</dbReference>
<dbReference type="InterPro" id="IPR003593">
    <property type="entry name" value="AAA+_ATPase"/>
</dbReference>
<dbReference type="InterPro" id="IPR051120">
    <property type="entry name" value="ABC_AA/LPS_Transport"/>
</dbReference>
<dbReference type="InterPro" id="IPR003439">
    <property type="entry name" value="ABC_transporter-like_ATP-bd"/>
</dbReference>
<dbReference type="InterPro" id="IPR017871">
    <property type="entry name" value="ABC_transporter-like_CS"/>
</dbReference>
<dbReference type="InterPro" id="IPR032823">
    <property type="entry name" value="BCA_ABC_TP_C"/>
</dbReference>
<dbReference type="InterPro" id="IPR027417">
    <property type="entry name" value="P-loop_NTPase"/>
</dbReference>
<dbReference type="NCBIfam" id="NF008449">
    <property type="entry name" value="PRK11300.1"/>
    <property type="match status" value="1"/>
</dbReference>
<dbReference type="PANTHER" id="PTHR45772">
    <property type="entry name" value="CONSERVED COMPONENT OF ABC TRANSPORTER FOR NATURAL AMINO ACIDS-RELATED"/>
    <property type="match status" value="1"/>
</dbReference>
<dbReference type="PANTHER" id="PTHR45772:SF11">
    <property type="entry name" value="HIGH-AFFINITY BRANCHED-CHAIN AMINO ACID TRANSPORT ATP-BINDING PROTEIN LIVG"/>
    <property type="match status" value="1"/>
</dbReference>
<dbReference type="Pfam" id="PF00005">
    <property type="entry name" value="ABC_tran"/>
    <property type="match status" value="1"/>
</dbReference>
<dbReference type="Pfam" id="PF12399">
    <property type="entry name" value="BCA_ABC_TP_C"/>
    <property type="match status" value="1"/>
</dbReference>
<dbReference type="SMART" id="SM00382">
    <property type="entry name" value="AAA"/>
    <property type="match status" value="1"/>
</dbReference>
<dbReference type="SUPFAM" id="SSF52540">
    <property type="entry name" value="P-loop containing nucleoside triphosphate hydrolases"/>
    <property type="match status" value="1"/>
</dbReference>
<dbReference type="PROSITE" id="PS00211">
    <property type="entry name" value="ABC_TRANSPORTER_1"/>
    <property type="match status" value="1"/>
</dbReference>
<dbReference type="PROSITE" id="PS50893">
    <property type="entry name" value="ABC_TRANSPORTER_2"/>
    <property type="match status" value="1"/>
</dbReference>
<keyword id="KW-0029">Amino-acid transport</keyword>
<keyword id="KW-0067">ATP-binding</keyword>
<keyword id="KW-0547">Nucleotide-binding</keyword>
<keyword id="KW-0813">Transport</keyword>
<comment type="function">
    <text evidence="1">Component of the high-affinity branched-chain amino acid transport system.</text>
</comment>
<comment type="similarity">
    <text evidence="3">Belongs to the ABC transporter superfamily.</text>
</comment>
<accession>P0A194</accession>
<accession>P30293</accession>
<evidence type="ECO:0000250" key="1"/>
<evidence type="ECO:0000255" key="2">
    <source>
        <dbReference type="PROSITE-ProRule" id="PRU00434"/>
    </source>
</evidence>
<evidence type="ECO:0000305" key="3"/>
<feature type="chain" id="PRO_0000092408" description="High-affinity branched-chain amino acid transport ATP-binding protein LivG">
    <location>
        <begin position="1"/>
        <end position="255"/>
    </location>
</feature>
<feature type="domain" description="ABC transporter" evidence="2">
    <location>
        <begin position="6"/>
        <end position="254"/>
    </location>
</feature>
<feature type="binding site" evidence="2">
    <location>
        <begin position="38"/>
        <end position="45"/>
    </location>
    <ligand>
        <name>ATP</name>
        <dbReference type="ChEBI" id="CHEBI:30616"/>
    </ligand>
</feature>
<gene>
    <name type="primary">livG</name>
    <name type="synonym">livF</name>
    <name type="ordered locus">STY4251</name>
    <name type="ordered locus">t3961</name>
</gene>
<sequence length="255" mass="28452">MSQPLLAVNGLMMRFGGLLAVNNVSLELREREIVSLIGPNGAGKTTVFNCLTGFYKPTGGTITLRERHLEGLPGQQIARMGVVRTFQHVRLFREMTVIENLLVAQHQQLKTGLFSGLLKTPAFRRAQSEALDRAATWLERIGLLEHANRQASNLAYGDQRRLEIARCMVTQPEILMLDEPAAGLNPKETKELDELIAELRNHHNTTILLIEHDMKLVMGISDRIYVVNQGTPLANGTPEEIRNNPDVIRAYLGEA</sequence>